<name>PETL_PHYPA</name>
<organism>
    <name type="scientific">Physcomitrium patens</name>
    <name type="common">Spreading-leaved earth moss</name>
    <name type="synonym">Physcomitrella patens</name>
    <dbReference type="NCBI Taxonomy" id="3218"/>
    <lineage>
        <taxon>Eukaryota</taxon>
        <taxon>Viridiplantae</taxon>
        <taxon>Streptophyta</taxon>
        <taxon>Embryophyta</taxon>
        <taxon>Bryophyta</taxon>
        <taxon>Bryophytina</taxon>
        <taxon>Bryopsida</taxon>
        <taxon>Funariidae</taxon>
        <taxon>Funariales</taxon>
        <taxon>Funariaceae</taxon>
        <taxon>Physcomitrium</taxon>
    </lineage>
</organism>
<accession>Q6YXM0</accession>
<gene>
    <name evidence="1" type="primary">petL</name>
</gene>
<evidence type="ECO:0000255" key="1">
    <source>
        <dbReference type="HAMAP-Rule" id="MF_00433"/>
    </source>
</evidence>
<dbReference type="EMBL" id="AP005672">
    <property type="protein sequence ID" value="BAC85032.1"/>
    <property type="molecule type" value="Genomic_DNA"/>
</dbReference>
<dbReference type="RefSeq" id="NP_904182.1">
    <property type="nucleotide sequence ID" value="NC_005087.2"/>
</dbReference>
<dbReference type="RefSeq" id="YP_009477513.1">
    <property type="nucleotide sequence ID" value="NC_037465.1"/>
</dbReference>
<dbReference type="SMR" id="Q6YXM0"/>
<dbReference type="STRING" id="3218.Q6YXM0"/>
<dbReference type="GeneID" id="2546694"/>
<dbReference type="GeneID" id="36487127"/>
<dbReference type="KEGG" id="ppp:2546694"/>
<dbReference type="InParanoid" id="Q6YXM0"/>
<dbReference type="Proteomes" id="UP000006727">
    <property type="component" value="Chloroplast"/>
</dbReference>
<dbReference type="GO" id="GO:0009535">
    <property type="term" value="C:chloroplast thylakoid membrane"/>
    <property type="evidence" value="ECO:0007669"/>
    <property type="project" value="UniProtKB-SubCell"/>
</dbReference>
<dbReference type="GO" id="GO:0009512">
    <property type="term" value="C:cytochrome b6f complex"/>
    <property type="evidence" value="ECO:0007669"/>
    <property type="project" value="InterPro"/>
</dbReference>
<dbReference type="GO" id="GO:0045158">
    <property type="term" value="F:electron transporter, transferring electrons within cytochrome b6/f complex of photosystem II activity"/>
    <property type="evidence" value="ECO:0007669"/>
    <property type="project" value="UniProtKB-UniRule"/>
</dbReference>
<dbReference type="GO" id="GO:0015979">
    <property type="term" value="P:photosynthesis"/>
    <property type="evidence" value="ECO:0007669"/>
    <property type="project" value="UniProtKB-KW"/>
</dbReference>
<dbReference type="HAMAP" id="MF_00433">
    <property type="entry name" value="Cytb6_f_PetL"/>
    <property type="match status" value="1"/>
</dbReference>
<dbReference type="InterPro" id="IPR007802">
    <property type="entry name" value="Cyt_b6/f_cplx_su6"/>
</dbReference>
<dbReference type="PANTHER" id="PTHR37266">
    <property type="entry name" value="CYTOCHROME B6-F COMPLEX SUBUNIT 6"/>
    <property type="match status" value="1"/>
</dbReference>
<dbReference type="PANTHER" id="PTHR37266:SF1">
    <property type="entry name" value="CYTOCHROME B6-F COMPLEX SUBUNIT 6"/>
    <property type="match status" value="1"/>
</dbReference>
<dbReference type="Pfam" id="PF05115">
    <property type="entry name" value="PetL"/>
    <property type="match status" value="1"/>
</dbReference>
<dbReference type="SUPFAM" id="SSF103436">
    <property type="entry name" value="PetL subunit of the cytochrome b6f complex"/>
    <property type="match status" value="1"/>
</dbReference>
<reference key="1">
    <citation type="journal article" date="2003" name="Nucleic Acids Res.">
        <title>Complete chloroplast DNA sequence of the moss Physcomitrella patens: evidence for the loss and relocation of rpoA from the chloroplast to the nucleus.</title>
        <authorList>
            <person name="Sugiura C."/>
            <person name="Kobayashi Y."/>
            <person name="Setsuyuki A."/>
            <person name="Sugita C."/>
            <person name="Sugita M."/>
        </authorList>
    </citation>
    <scope>NUCLEOTIDE SEQUENCE [LARGE SCALE GENOMIC DNA]</scope>
    <source>
        <strain>cv. Gransden 2004</strain>
    </source>
</reference>
<keyword id="KW-0150">Chloroplast</keyword>
<keyword id="KW-0249">Electron transport</keyword>
<keyword id="KW-0472">Membrane</keyword>
<keyword id="KW-0602">Photosynthesis</keyword>
<keyword id="KW-0934">Plastid</keyword>
<keyword id="KW-1185">Reference proteome</keyword>
<keyword id="KW-0793">Thylakoid</keyword>
<keyword id="KW-0812">Transmembrane</keyword>
<keyword id="KW-1133">Transmembrane helix</keyword>
<keyword id="KW-0813">Transport</keyword>
<protein>
    <recommendedName>
        <fullName evidence="1">Cytochrome b6-f complex subunit 6</fullName>
    </recommendedName>
    <alternativeName>
        <fullName evidence="1">Cytochrome b6-f complex subunit PetL</fullName>
    </alternativeName>
    <alternativeName>
        <fullName evidence="1">Cytochrome b6-f complex subunit VI</fullName>
    </alternativeName>
</protein>
<geneLocation type="chloroplast"/>
<proteinExistence type="inferred from homology"/>
<sequence>MLTIISYFGFLFGALTLALILFIGLNKIQLI</sequence>
<feature type="chain" id="PRO_0000220467" description="Cytochrome b6-f complex subunit 6">
    <location>
        <begin position="1"/>
        <end position="31"/>
    </location>
</feature>
<feature type="transmembrane region" description="Helical" evidence="1">
    <location>
        <begin position="4"/>
        <end position="24"/>
    </location>
</feature>
<comment type="function">
    <text evidence="1">Component of the cytochrome b6-f complex, which mediates electron transfer between photosystem II (PSII) and photosystem I (PSI), cyclic electron flow around PSI, and state transitions. PetL is important for photoautotrophic growth as well as for electron transfer efficiency and stability of the cytochrome b6-f complex.</text>
</comment>
<comment type="subunit">
    <text evidence="1">The 4 large subunits of the cytochrome b6-f complex are cytochrome b6, subunit IV (17 kDa polypeptide, PetD), cytochrome f and the Rieske protein, while the 4 small subunits are PetG, PetL, PetM and PetN. The complex functions as a dimer.</text>
</comment>
<comment type="subcellular location">
    <subcellularLocation>
        <location evidence="1">Plastid</location>
        <location evidence="1">Chloroplast thylakoid membrane</location>
        <topology evidence="1">Single-pass membrane protein</topology>
    </subcellularLocation>
</comment>
<comment type="similarity">
    <text evidence="1">Belongs to the PetL family.</text>
</comment>